<keyword id="KW-1185">Reference proteome</keyword>
<keyword id="KW-0687">Ribonucleoprotein</keyword>
<keyword id="KW-0689">Ribosomal protein</keyword>
<keyword id="KW-0694">RNA-binding</keyword>
<keyword id="KW-0699">rRNA-binding</keyword>
<accession>A0LE15</accession>
<proteinExistence type="inferred from homology"/>
<protein>
    <recommendedName>
        <fullName evidence="1">Small ribosomal subunit protein uS15</fullName>
    </recommendedName>
    <alternativeName>
        <fullName evidence="2">30S ribosomal protein S15</fullName>
    </alternativeName>
</protein>
<dbReference type="EMBL" id="CP000471">
    <property type="protein sequence ID" value="ABK46208.1"/>
    <property type="molecule type" value="Genomic_DNA"/>
</dbReference>
<dbReference type="RefSeq" id="WP_011715260.1">
    <property type="nucleotide sequence ID" value="NC_008576.1"/>
</dbReference>
<dbReference type="SMR" id="A0LE15"/>
<dbReference type="STRING" id="156889.Mmc1_3723"/>
<dbReference type="KEGG" id="mgm:Mmc1_3723"/>
<dbReference type="eggNOG" id="COG0184">
    <property type="taxonomic scope" value="Bacteria"/>
</dbReference>
<dbReference type="HOGENOM" id="CLU_148518_0_0_5"/>
<dbReference type="OrthoDB" id="9799262at2"/>
<dbReference type="Proteomes" id="UP000002586">
    <property type="component" value="Chromosome"/>
</dbReference>
<dbReference type="GO" id="GO:0022627">
    <property type="term" value="C:cytosolic small ribosomal subunit"/>
    <property type="evidence" value="ECO:0007669"/>
    <property type="project" value="TreeGrafter"/>
</dbReference>
<dbReference type="GO" id="GO:0019843">
    <property type="term" value="F:rRNA binding"/>
    <property type="evidence" value="ECO:0007669"/>
    <property type="project" value="UniProtKB-UniRule"/>
</dbReference>
<dbReference type="GO" id="GO:0003735">
    <property type="term" value="F:structural constituent of ribosome"/>
    <property type="evidence" value="ECO:0007669"/>
    <property type="project" value="InterPro"/>
</dbReference>
<dbReference type="GO" id="GO:0006412">
    <property type="term" value="P:translation"/>
    <property type="evidence" value="ECO:0007669"/>
    <property type="project" value="UniProtKB-UniRule"/>
</dbReference>
<dbReference type="CDD" id="cd00353">
    <property type="entry name" value="Ribosomal_S15p_S13e"/>
    <property type="match status" value="1"/>
</dbReference>
<dbReference type="FunFam" id="1.10.287.10:FF:000002">
    <property type="entry name" value="30S ribosomal protein S15"/>
    <property type="match status" value="1"/>
</dbReference>
<dbReference type="Gene3D" id="6.10.250.3130">
    <property type="match status" value="1"/>
</dbReference>
<dbReference type="Gene3D" id="1.10.287.10">
    <property type="entry name" value="S15/NS1, RNA-binding"/>
    <property type="match status" value="1"/>
</dbReference>
<dbReference type="HAMAP" id="MF_01343_B">
    <property type="entry name" value="Ribosomal_uS15_B"/>
    <property type="match status" value="1"/>
</dbReference>
<dbReference type="InterPro" id="IPR000589">
    <property type="entry name" value="Ribosomal_uS15"/>
</dbReference>
<dbReference type="InterPro" id="IPR005290">
    <property type="entry name" value="Ribosomal_uS15_bac-type"/>
</dbReference>
<dbReference type="InterPro" id="IPR009068">
    <property type="entry name" value="uS15_NS1_RNA-bd_sf"/>
</dbReference>
<dbReference type="NCBIfam" id="TIGR00952">
    <property type="entry name" value="S15_bact"/>
    <property type="match status" value="1"/>
</dbReference>
<dbReference type="PANTHER" id="PTHR23321">
    <property type="entry name" value="RIBOSOMAL PROTEIN S15, BACTERIAL AND ORGANELLAR"/>
    <property type="match status" value="1"/>
</dbReference>
<dbReference type="PANTHER" id="PTHR23321:SF26">
    <property type="entry name" value="SMALL RIBOSOMAL SUBUNIT PROTEIN US15M"/>
    <property type="match status" value="1"/>
</dbReference>
<dbReference type="Pfam" id="PF00312">
    <property type="entry name" value="Ribosomal_S15"/>
    <property type="match status" value="1"/>
</dbReference>
<dbReference type="SMART" id="SM01387">
    <property type="entry name" value="Ribosomal_S15"/>
    <property type="match status" value="1"/>
</dbReference>
<dbReference type="SUPFAM" id="SSF47060">
    <property type="entry name" value="S15/NS1 RNA-binding domain"/>
    <property type="match status" value="1"/>
</dbReference>
<dbReference type="PROSITE" id="PS00362">
    <property type="entry name" value="RIBOSOMAL_S15"/>
    <property type="match status" value="1"/>
</dbReference>
<gene>
    <name evidence="1" type="primary">rpsO</name>
    <name type="ordered locus">Mmc1_3723</name>
</gene>
<name>RS15_MAGMM</name>
<feature type="chain" id="PRO_1000054807" description="Small ribosomal subunit protein uS15">
    <location>
        <begin position="1"/>
        <end position="89"/>
    </location>
</feature>
<organism>
    <name type="scientific">Magnetococcus marinus (strain ATCC BAA-1437 / JCM 17883 / MC-1)</name>
    <dbReference type="NCBI Taxonomy" id="156889"/>
    <lineage>
        <taxon>Bacteria</taxon>
        <taxon>Pseudomonadati</taxon>
        <taxon>Pseudomonadota</taxon>
        <taxon>Alphaproteobacteria</taxon>
        <taxon>Magnetococcales</taxon>
        <taxon>Magnetococcaceae</taxon>
        <taxon>Magnetococcus</taxon>
    </lineage>
</organism>
<sequence>MSITAERKQELIAEYATKENDTGSPEVQVAILTERINNLTDHLRGHNKDHHSRRGLLKMVGLRRRLLSYVQKEDRSRYQDLIKRLGLRK</sequence>
<evidence type="ECO:0000255" key="1">
    <source>
        <dbReference type="HAMAP-Rule" id="MF_01343"/>
    </source>
</evidence>
<evidence type="ECO:0000305" key="2"/>
<comment type="function">
    <text evidence="1">One of the primary rRNA binding proteins, it binds directly to 16S rRNA where it helps nucleate assembly of the platform of the 30S subunit by binding and bridging several RNA helices of the 16S rRNA.</text>
</comment>
<comment type="function">
    <text evidence="1">Forms an intersubunit bridge (bridge B4) with the 23S rRNA of the 50S subunit in the ribosome.</text>
</comment>
<comment type="subunit">
    <text evidence="1">Part of the 30S ribosomal subunit. Forms a bridge to the 50S subunit in the 70S ribosome, contacting the 23S rRNA.</text>
</comment>
<comment type="similarity">
    <text evidence="1">Belongs to the universal ribosomal protein uS15 family.</text>
</comment>
<reference key="1">
    <citation type="journal article" date="2009" name="Appl. Environ. Microbiol.">
        <title>Complete genome sequence of the chemolithoautotrophic marine magnetotactic coccus strain MC-1.</title>
        <authorList>
            <person name="Schubbe S."/>
            <person name="Williams T.J."/>
            <person name="Xie G."/>
            <person name="Kiss H.E."/>
            <person name="Brettin T.S."/>
            <person name="Martinez D."/>
            <person name="Ross C.A."/>
            <person name="Schuler D."/>
            <person name="Cox B.L."/>
            <person name="Nealson K.H."/>
            <person name="Bazylinski D.A."/>
        </authorList>
    </citation>
    <scope>NUCLEOTIDE SEQUENCE [LARGE SCALE GENOMIC DNA]</scope>
    <source>
        <strain>ATCC BAA-1437 / JCM 17883 / MC-1</strain>
    </source>
</reference>